<organism>
    <name type="scientific">Mus musculus</name>
    <name type="common">Mouse</name>
    <dbReference type="NCBI Taxonomy" id="10090"/>
    <lineage>
        <taxon>Eukaryota</taxon>
        <taxon>Metazoa</taxon>
        <taxon>Chordata</taxon>
        <taxon>Craniata</taxon>
        <taxon>Vertebrata</taxon>
        <taxon>Euteleostomi</taxon>
        <taxon>Mammalia</taxon>
        <taxon>Eutheria</taxon>
        <taxon>Euarchontoglires</taxon>
        <taxon>Glires</taxon>
        <taxon>Rodentia</taxon>
        <taxon>Myomorpha</taxon>
        <taxon>Muroidea</taxon>
        <taxon>Muridae</taxon>
        <taxon>Murinae</taxon>
        <taxon>Mus</taxon>
        <taxon>Mus</taxon>
    </lineage>
</organism>
<feature type="chain" id="PRO_0000057114" description="Uridine diphosphate glucose pyrophosphatase NUDT14">
    <location>
        <begin position="1"/>
        <end position="222"/>
    </location>
</feature>
<feature type="domain" description="Nudix hydrolase" evidence="2">
    <location>
        <begin position="38"/>
        <end position="206"/>
    </location>
</feature>
<feature type="short sequence motif" description="Nudix box">
    <location>
        <begin position="111"/>
        <end position="129"/>
    </location>
</feature>
<feature type="sequence conflict" description="In Ref. 1; BAB28691." evidence="3" ref="1">
    <original>F</original>
    <variation>I</variation>
    <location>
        <position position="192"/>
    </location>
</feature>
<reference key="1">
    <citation type="journal article" date="2005" name="Science">
        <title>The transcriptional landscape of the mammalian genome.</title>
        <authorList>
            <person name="Carninci P."/>
            <person name="Kasukawa T."/>
            <person name="Katayama S."/>
            <person name="Gough J."/>
            <person name="Frith M.C."/>
            <person name="Maeda N."/>
            <person name="Oyama R."/>
            <person name="Ravasi T."/>
            <person name="Lenhard B."/>
            <person name="Wells C."/>
            <person name="Kodzius R."/>
            <person name="Shimokawa K."/>
            <person name="Bajic V.B."/>
            <person name="Brenner S.E."/>
            <person name="Batalov S."/>
            <person name="Forrest A.R."/>
            <person name="Zavolan M."/>
            <person name="Davis M.J."/>
            <person name="Wilming L.G."/>
            <person name="Aidinis V."/>
            <person name="Allen J.E."/>
            <person name="Ambesi-Impiombato A."/>
            <person name="Apweiler R."/>
            <person name="Aturaliya R.N."/>
            <person name="Bailey T.L."/>
            <person name="Bansal M."/>
            <person name="Baxter L."/>
            <person name="Beisel K.W."/>
            <person name="Bersano T."/>
            <person name="Bono H."/>
            <person name="Chalk A.M."/>
            <person name="Chiu K.P."/>
            <person name="Choudhary V."/>
            <person name="Christoffels A."/>
            <person name="Clutterbuck D.R."/>
            <person name="Crowe M.L."/>
            <person name="Dalla E."/>
            <person name="Dalrymple B.P."/>
            <person name="de Bono B."/>
            <person name="Della Gatta G."/>
            <person name="di Bernardo D."/>
            <person name="Down T."/>
            <person name="Engstrom P."/>
            <person name="Fagiolini M."/>
            <person name="Faulkner G."/>
            <person name="Fletcher C.F."/>
            <person name="Fukushima T."/>
            <person name="Furuno M."/>
            <person name="Futaki S."/>
            <person name="Gariboldi M."/>
            <person name="Georgii-Hemming P."/>
            <person name="Gingeras T.R."/>
            <person name="Gojobori T."/>
            <person name="Green R.E."/>
            <person name="Gustincich S."/>
            <person name="Harbers M."/>
            <person name="Hayashi Y."/>
            <person name="Hensch T.K."/>
            <person name="Hirokawa N."/>
            <person name="Hill D."/>
            <person name="Huminiecki L."/>
            <person name="Iacono M."/>
            <person name="Ikeo K."/>
            <person name="Iwama A."/>
            <person name="Ishikawa T."/>
            <person name="Jakt M."/>
            <person name="Kanapin A."/>
            <person name="Katoh M."/>
            <person name="Kawasawa Y."/>
            <person name="Kelso J."/>
            <person name="Kitamura H."/>
            <person name="Kitano H."/>
            <person name="Kollias G."/>
            <person name="Krishnan S.P."/>
            <person name="Kruger A."/>
            <person name="Kummerfeld S.K."/>
            <person name="Kurochkin I.V."/>
            <person name="Lareau L.F."/>
            <person name="Lazarevic D."/>
            <person name="Lipovich L."/>
            <person name="Liu J."/>
            <person name="Liuni S."/>
            <person name="McWilliam S."/>
            <person name="Madan Babu M."/>
            <person name="Madera M."/>
            <person name="Marchionni L."/>
            <person name="Matsuda H."/>
            <person name="Matsuzawa S."/>
            <person name="Miki H."/>
            <person name="Mignone F."/>
            <person name="Miyake S."/>
            <person name="Morris K."/>
            <person name="Mottagui-Tabar S."/>
            <person name="Mulder N."/>
            <person name="Nakano N."/>
            <person name="Nakauchi H."/>
            <person name="Ng P."/>
            <person name="Nilsson R."/>
            <person name="Nishiguchi S."/>
            <person name="Nishikawa S."/>
            <person name="Nori F."/>
            <person name="Ohara O."/>
            <person name="Okazaki Y."/>
            <person name="Orlando V."/>
            <person name="Pang K.C."/>
            <person name="Pavan W.J."/>
            <person name="Pavesi G."/>
            <person name="Pesole G."/>
            <person name="Petrovsky N."/>
            <person name="Piazza S."/>
            <person name="Reed J."/>
            <person name="Reid J.F."/>
            <person name="Ring B.Z."/>
            <person name="Ringwald M."/>
            <person name="Rost B."/>
            <person name="Ruan Y."/>
            <person name="Salzberg S.L."/>
            <person name="Sandelin A."/>
            <person name="Schneider C."/>
            <person name="Schoenbach C."/>
            <person name="Sekiguchi K."/>
            <person name="Semple C.A."/>
            <person name="Seno S."/>
            <person name="Sessa L."/>
            <person name="Sheng Y."/>
            <person name="Shibata Y."/>
            <person name="Shimada H."/>
            <person name="Shimada K."/>
            <person name="Silva D."/>
            <person name="Sinclair B."/>
            <person name="Sperling S."/>
            <person name="Stupka E."/>
            <person name="Sugiura K."/>
            <person name="Sultana R."/>
            <person name="Takenaka Y."/>
            <person name="Taki K."/>
            <person name="Tammoja K."/>
            <person name="Tan S.L."/>
            <person name="Tang S."/>
            <person name="Taylor M.S."/>
            <person name="Tegner J."/>
            <person name="Teichmann S.A."/>
            <person name="Ueda H.R."/>
            <person name="van Nimwegen E."/>
            <person name="Verardo R."/>
            <person name="Wei C.L."/>
            <person name="Yagi K."/>
            <person name="Yamanishi H."/>
            <person name="Zabarovsky E."/>
            <person name="Zhu S."/>
            <person name="Zimmer A."/>
            <person name="Hide W."/>
            <person name="Bult C."/>
            <person name="Grimmond S.M."/>
            <person name="Teasdale R.D."/>
            <person name="Liu E.T."/>
            <person name="Brusic V."/>
            <person name="Quackenbush J."/>
            <person name="Wahlestedt C."/>
            <person name="Mattick J.S."/>
            <person name="Hume D.A."/>
            <person name="Kai C."/>
            <person name="Sasaki D."/>
            <person name="Tomaru Y."/>
            <person name="Fukuda S."/>
            <person name="Kanamori-Katayama M."/>
            <person name="Suzuki M."/>
            <person name="Aoki J."/>
            <person name="Arakawa T."/>
            <person name="Iida J."/>
            <person name="Imamura K."/>
            <person name="Itoh M."/>
            <person name="Kato T."/>
            <person name="Kawaji H."/>
            <person name="Kawagashira N."/>
            <person name="Kawashima T."/>
            <person name="Kojima M."/>
            <person name="Kondo S."/>
            <person name="Konno H."/>
            <person name="Nakano K."/>
            <person name="Ninomiya N."/>
            <person name="Nishio T."/>
            <person name="Okada M."/>
            <person name="Plessy C."/>
            <person name="Shibata K."/>
            <person name="Shiraki T."/>
            <person name="Suzuki S."/>
            <person name="Tagami M."/>
            <person name="Waki K."/>
            <person name="Watahiki A."/>
            <person name="Okamura-Oho Y."/>
            <person name="Suzuki H."/>
            <person name="Kawai J."/>
            <person name="Hayashizaki Y."/>
        </authorList>
    </citation>
    <scope>NUCLEOTIDE SEQUENCE [LARGE SCALE MRNA]</scope>
    <source>
        <strain>C57BL/6J</strain>
        <tissue>Embryo</tissue>
    </source>
</reference>
<reference key="2">
    <citation type="journal article" date="2004" name="Genome Res.">
        <title>The status, quality, and expansion of the NIH full-length cDNA project: the Mammalian Gene Collection (MGC).</title>
        <authorList>
            <consortium name="The MGC Project Team"/>
        </authorList>
    </citation>
    <scope>NUCLEOTIDE SEQUENCE [LARGE SCALE MRNA]</scope>
</reference>
<reference key="3">
    <citation type="journal article" date="2010" name="Cell">
        <title>A tissue-specific atlas of mouse protein phosphorylation and expression.</title>
        <authorList>
            <person name="Huttlin E.L."/>
            <person name="Jedrychowski M.P."/>
            <person name="Elias J.E."/>
            <person name="Goswami T."/>
            <person name="Rad R."/>
            <person name="Beausoleil S.A."/>
            <person name="Villen J."/>
            <person name="Haas W."/>
            <person name="Sowa M.E."/>
            <person name="Gygi S.P."/>
        </authorList>
    </citation>
    <scope>IDENTIFICATION BY MASS SPECTROMETRY [LARGE SCALE ANALYSIS]</scope>
    <source>
        <tissue>Brain</tissue>
        <tissue>Brown adipose tissue</tissue>
        <tissue>Kidney</tissue>
        <tissue>Lung</tissue>
        <tissue>Pancreas</tissue>
    </source>
</reference>
<protein>
    <recommendedName>
        <fullName>Uridine diphosphate glucose pyrophosphatase NUDT14</fullName>
        <shortName>UDPG pyrophosphatase</shortName>
        <shortName>UGPPase</shortName>
        <ecNumber>3.6.1.45</ecNumber>
    </recommendedName>
    <alternativeName>
        <fullName>Nucleoside diphosphate-linked moiety X motif 14</fullName>
        <shortName>Nudix motif 14</shortName>
    </alternativeName>
</protein>
<evidence type="ECO:0000250" key="1"/>
<evidence type="ECO:0000255" key="2">
    <source>
        <dbReference type="PROSITE-ProRule" id="PRU00794"/>
    </source>
</evidence>
<evidence type="ECO:0000305" key="3"/>
<sequence length="222" mass="24444">MERIDGVAVGLCAHSPYLRPFTLHYRQDGVQKSWDFMKTHDSVTILMFNSSRRSLVLVKQFRPAVYAGEVERHFPGSLTAVNQDQPQELQQALPGSAGVMVELCAGIVDQPGLSLEEAACKEAWEECGYRLVPTDLRRVATYMSGVGLTSSRQTMFYAEVTDAQRGGPGGGLAEEGELIEVIHLNLDDAQAFADNPDIPKTLGVIYAISWFFSQVVPHLSLQ</sequence>
<accession>Q9D142</accession>
<accession>Q9CSD2</accession>
<comment type="function">
    <text evidence="1">Hydrolyzes UDP-glucose to glucose 1-phosphate and UMP and ADP-ribose to ribose 5-phosphate and AMP. The physiological substrate is probably UDP-glucose. Poor activity on other substrates such as ADP-glucose, CDP-glucose, GDP-glucose and GDP-mannose (By similarity).</text>
</comment>
<comment type="catalytic activity">
    <reaction>
        <text>UDP-sugar + H2O = UMP + alpha-D-aldose 1-phosphate.</text>
        <dbReference type="EC" id="3.6.1.45"/>
    </reaction>
</comment>
<comment type="cofactor">
    <cofactor evidence="1">
        <name>Mg(2+)</name>
        <dbReference type="ChEBI" id="CHEBI:18420"/>
    </cofactor>
</comment>
<comment type="subunit">
    <text evidence="1">Homodimer.</text>
</comment>
<comment type="subcellular location">
    <subcellularLocation>
        <location evidence="1">Cytoplasm</location>
    </subcellularLocation>
</comment>
<comment type="similarity">
    <text evidence="3">Belongs to the Nudix hydrolase family.</text>
</comment>
<proteinExistence type="evidence at protein level"/>
<gene>
    <name type="primary">Nudt14</name>
</gene>
<name>NUD14_MOUSE</name>
<keyword id="KW-0963">Cytoplasm</keyword>
<keyword id="KW-0378">Hydrolase</keyword>
<keyword id="KW-0460">Magnesium</keyword>
<keyword id="KW-1185">Reference proteome</keyword>
<dbReference type="EC" id="3.6.1.45"/>
<dbReference type="EMBL" id="AK003991">
    <property type="protein sequence ID" value="BAB23110.1"/>
    <property type="molecule type" value="mRNA"/>
</dbReference>
<dbReference type="EMBL" id="AK013174">
    <property type="protein sequence ID" value="BAB28691.2"/>
    <property type="molecule type" value="mRNA"/>
</dbReference>
<dbReference type="EMBL" id="BC025444">
    <property type="protein sequence ID" value="AAH25444.1"/>
    <property type="molecule type" value="mRNA"/>
</dbReference>
<dbReference type="CCDS" id="CCDS26201.1"/>
<dbReference type="RefSeq" id="NP_001303653.1">
    <property type="nucleotide sequence ID" value="NM_001316724.1"/>
</dbReference>
<dbReference type="RefSeq" id="NP_079675.1">
    <property type="nucleotide sequence ID" value="NM_025399.4"/>
</dbReference>
<dbReference type="SMR" id="Q9D142"/>
<dbReference type="BioGRID" id="211271">
    <property type="interactions" value="4"/>
</dbReference>
<dbReference type="FunCoup" id="Q9D142">
    <property type="interactions" value="217"/>
</dbReference>
<dbReference type="STRING" id="10090.ENSMUSP00000152599"/>
<dbReference type="iPTMnet" id="Q9D142"/>
<dbReference type="PhosphoSitePlus" id="Q9D142"/>
<dbReference type="PaxDb" id="10090-ENSMUSP00000002881"/>
<dbReference type="PeptideAtlas" id="Q9D142"/>
<dbReference type="ProteomicsDB" id="291923"/>
<dbReference type="Pumba" id="Q9D142"/>
<dbReference type="Antibodypedia" id="49103">
    <property type="antibodies" value="65 antibodies from 17 providers"/>
</dbReference>
<dbReference type="DNASU" id="66174"/>
<dbReference type="Ensembl" id="ENSMUST00000221397.2">
    <property type="protein sequence ID" value="ENSMUSP00000152599.2"/>
    <property type="gene ID" value="ENSMUSG00000002804.5"/>
</dbReference>
<dbReference type="GeneID" id="66174"/>
<dbReference type="KEGG" id="mmu:66174"/>
<dbReference type="UCSC" id="uc007pfm.1">
    <property type="organism name" value="mouse"/>
</dbReference>
<dbReference type="AGR" id="MGI:1913424"/>
<dbReference type="CTD" id="256281"/>
<dbReference type="MGI" id="MGI:1913424">
    <property type="gene designation" value="Nudt14"/>
</dbReference>
<dbReference type="VEuPathDB" id="HostDB:ENSMUSG00000002804"/>
<dbReference type="eggNOG" id="KOG4432">
    <property type="taxonomic scope" value="Eukaryota"/>
</dbReference>
<dbReference type="GeneTree" id="ENSGT00940000154045"/>
<dbReference type="HOGENOM" id="CLU_062658_1_0_1"/>
<dbReference type="InParanoid" id="Q9D142"/>
<dbReference type="OMA" id="YTYELCA"/>
<dbReference type="OrthoDB" id="10249920at2759"/>
<dbReference type="PhylomeDB" id="Q9D142"/>
<dbReference type="TreeFam" id="TF313661"/>
<dbReference type="BRENDA" id="3.6.1.45">
    <property type="organism ID" value="3474"/>
</dbReference>
<dbReference type="Reactome" id="R-MMU-480985">
    <property type="pathway name" value="Synthesis of dolichyl-phosphate-glucose"/>
</dbReference>
<dbReference type="BioGRID-ORCS" id="66174">
    <property type="hits" value="6 hits in 76 CRISPR screens"/>
</dbReference>
<dbReference type="PRO" id="PR:Q9D142"/>
<dbReference type="Proteomes" id="UP000000589">
    <property type="component" value="Chromosome 12"/>
</dbReference>
<dbReference type="RNAct" id="Q9D142">
    <property type="molecule type" value="protein"/>
</dbReference>
<dbReference type="Bgee" id="ENSMUSG00000002804">
    <property type="expression patterns" value="Expressed in lip and 207 other cell types or tissues"/>
</dbReference>
<dbReference type="ExpressionAtlas" id="Q9D142">
    <property type="expression patterns" value="baseline and differential"/>
</dbReference>
<dbReference type="GO" id="GO:0005737">
    <property type="term" value="C:cytoplasm"/>
    <property type="evidence" value="ECO:0007669"/>
    <property type="project" value="UniProtKB-SubCell"/>
</dbReference>
<dbReference type="GO" id="GO:0047631">
    <property type="term" value="F:ADP-ribose diphosphatase activity"/>
    <property type="evidence" value="ECO:0000314"/>
    <property type="project" value="MGI"/>
</dbReference>
<dbReference type="GO" id="GO:0042802">
    <property type="term" value="F:identical protein binding"/>
    <property type="evidence" value="ECO:0007669"/>
    <property type="project" value="Ensembl"/>
</dbReference>
<dbReference type="GO" id="GO:0046872">
    <property type="term" value="F:metal ion binding"/>
    <property type="evidence" value="ECO:0007669"/>
    <property type="project" value="InterPro"/>
</dbReference>
<dbReference type="GO" id="GO:0008768">
    <property type="term" value="F:UDP-sugar diphosphatase activity"/>
    <property type="evidence" value="ECO:0000314"/>
    <property type="project" value="MGI"/>
</dbReference>
<dbReference type="CDD" id="cd18887">
    <property type="entry name" value="NUDIX_UGPPase_Nudt14"/>
    <property type="match status" value="1"/>
</dbReference>
<dbReference type="FunFam" id="3.90.79.10:FF:000035">
    <property type="entry name" value="Uridine diphosphate glucose pyrophosphatase"/>
    <property type="match status" value="1"/>
</dbReference>
<dbReference type="Gene3D" id="3.90.79.10">
    <property type="entry name" value="Nucleoside Triphosphate Pyrophosphohydrolase"/>
    <property type="match status" value="1"/>
</dbReference>
<dbReference type="InterPro" id="IPR004385">
    <property type="entry name" value="NDP_pyrophosphatase"/>
</dbReference>
<dbReference type="InterPro" id="IPR015797">
    <property type="entry name" value="NUDIX_hydrolase-like_dom_sf"/>
</dbReference>
<dbReference type="InterPro" id="IPR000086">
    <property type="entry name" value="NUDIX_hydrolase_dom"/>
</dbReference>
<dbReference type="NCBIfam" id="TIGR00052">
    <property type="entry name" value="nudix-type nucleoside diphosphatase, YffH/AdpP family"/>
    <property type="match status" value="1"/>
</dbReference>
<dbReference type="PANTHER" id="PTHR11839">
    <property type="entry name" value="UDP/ADP-SUGAR PYROPHOSPHATASE"/>
    <property type="match status" value="1"/>
</dbReference>
<dbReference type="PANTHER" id="PTHR11839:SF15">
    <property type="entry name" value="URIDINE DIPHOSPHATE GLUCOSE PYROPHOSPHATASE NUDT14"/>
    <property type="match status" value="1"/>
</dbReference>
<dbReference type="Pfam" id="PF00293">
    <property type="entry name" value="NUDIX"/>
    <property type="match status" value="1"/>
</dbReference>
<dbReference type="SUPFAM" id="SSF55811">
    <property type="entry name" value="Nudix"/>
    <property type="match status" value="1"/>
</dbReference>
<dbReference type="PROSITE" id="PS51462">
    <property type="entry name" value="NUDIX"/>
    <property type="match status" value="1"/>
</dbReference>